<name>PTPR2_RAT</name>
<organism>
    <name type="scientific">Rattus norvegicus</name>
    <name type="common">Rat</name>
    <dbReference type="NCBI Taxonomy" id="10116"/>
    <lineage>
        <taxon>Eukaryota</taxon>
        <taxon>Metazoa</taxon>
        <taxon>Chordata</taxon>
        <taxon>Craniata</taxon>
        <taxon>Vertebrata</taxon>
        <taxon>Euteleostomi</taxon>
        <taxon>Mammalia</taxon>
        <taxon>Eutheria</taxon>
        <taxon>Euarchontoglires</taxon>
        <taxon>Glires</taxon>
        <taxon>Rodentia</taxon>
        <taxon>Myomorpha</taxon>
        <taxon>Muroidea</taxon>
        <taxon>Muridae</taxon>
        <taxon>Murinae</taxon>
        <taxon>Rattus</taxon>
    </lineage>
</organism>
<accession>Q63475</accession>
<dbReference type="EC" id="3.1.3.-" evidence="16"/>
<dbReference type="EC" id="3.1.3.48"/>
<dbReference type="EMBL" id="Z50735">
    <property type="protein sequence ID" value="CAA90600.1"/>
    <property type="molecule type" value="mRNA"/>
</dbReference>
<dbReference type="EMBL" id="U73458">
    <property type="protein sequence ID" value="AAC08036.1"/>
    <property type="molecule type" value="mRNA"/>
</dbReference>
<dbReference type="RefSeq" id="NP_113788.1">
    <property type="nucleotide sequence ID" value="NM_031600.2"/>
</dbReference>
<dbReference type="SMR" id="Q63475"/>
<dbReference type="FunCoup" id="Q63475">
    <property type="interactions" value="1178"/>
</dbReference>
<dbReference type="STRING" id="10116.ENSRNOP00000006942"/>
<dbReference type="GlyCosmos" id="Q63475">
    <property type="glycosylation" value="1 site, No reported glycans"/>
</dbReference>
<dbReference type="GlyGen" id="Q63475">
    <property type="glycosylation" value="1 site"/>
</dbReference>
<dbReference type="iPTMnet" id="Q63475"/>
<dbReference type="PhosphoSitePlus" id="Q63475"/>
<dbReference type="SwissPalm" id="Q63475"/>
<dbReference type="jPOST" id="Q63475"/>
<dbReference type="PaxDb" id="10116-ENSRNOP00000006942"/>
<dbReference type="Ensembl" id="ENSRNOT00000006942.5">
    <property type="protein sequence ID" value="ENSRNOP00000006942.4"/>
    <property type="gene ID" value="ENSRNOG00000005003.5"/>
</dbReference>
<dbReference type="GeneID" id="29714"/>
<dbReference type="KEGG" id="rno:29714"/>
<dbReference type="UCSC" id="RGD:61904">
    <property type="organism name" value="rat"/>
</dbReference>
<dbReference type="AGR" id="RGD:61904"/>
<dbReference type="CTD" id="5799"/>
<dbReference type="RGD" id="61904">
    <property type="gene designation" value="Ptprn2"/>
</dbReference>
<dbReference type="eggNOG" id="KOG0793">
    <property type="taxonomic scope" value="Eukaryota"/>
</dbReference>
<dbReference type="GeneTree" id="ENSGT00940000154095"/>
<dbReference type="HOGENOM" id="CLU_007905_0_0_1"/>
<dbReference type="InParanoid" id="Q63475"/>
<dbReference type="PhylomeDB" id="Q63475"/>
<dbReference type="TreeFam" id="TF351976"/>
<dbReference type="Reactome" id="R-RNO-6798695">
    <property type="pathway name" value="Neutrophil degranulation"/>
</dbReference>
<dbReference type="PRO" id="PR:Q63475"/>
<dbReference type="Proteomes" id="UP000002494">
    <property type="component" value="Chromosome 6"/>
</dbReference>
<dbReference type="Bgee" id="ENSRNOG00000005003">
    <property type="expression patterns" value="Expressed in frontal cortex and 9 other cell types or tissues"/>
</dbReference>
<dbReference type="GO" id="GO:0005788">
    <property type="term" value="C:endoplasmic reticulum lumen"/>
    <property type="evidence" value="ECO:0000314"/>
    <property type="project" value="RGD"/>
</dbReference>
<dbReference type="GO" id="GO:0098793">
    <property type="term" value="C:presynapse"/>
    <property type="evidence" value="ECO:0000314"/>
    <property type="project" value="SynGO"/>
</dbReference>
<dbReference type="GO" id="GO:0043235">
    <property type="term" value="C:receptor complex"/>
    <property type="evidence" value="ECO:0000266"/>
    <property type="project" value="RGD"/>
</dbReference>
<dbReference type="GO" id="GO:0030141">
    <property type="term" value="C:secretory granule"/>
    <property type="evidence" value="ECO:0000314"/>
    <property type="project" value="RGD"/>
</dbReference>
<dbReference type="GO" id="GO:0030667">
    <property type="term" value="C:secretory granule membrane"/>
    <property type="evidence" value="ECO:0000250"/>
    <property type="project" value="UniProtKB"/>
</dbReference>
<dbReference type="GO" id="GO:0045202">
    <property type="term" value="C:synapse"/>
    <property type="evidence" value="ECO:0000318"/>
    <property type="project" value="GO_Central"/>
</dbReference>
<dbReference type="GO" id="GO:0030672">
    <property type="term" value="C:synaptic vesicle membrane"/>
    <property type="evidence" value="ECO:0000314"/>
    <property type="project" value="SynGO"/>
</dbReference>
<dbReference type="GO" id="GO:0043195">
    <property type="term" value="C:terminal bouton"/>
    <property type="evidence" value="ECO:0000314"/>
    <property type="project" value="RGD"/>
</dbReference>
<dbReference type="GO" id="GO:0004725">
    <property type="term" value="F:protein tyrosine phosphatase activity"/>
    <property type="evidence" value="ECO:0007669"/>
    <property type="project" value="UniProtKB-EC"/>
</dbReference>
<dbReference type="GO" id="GO:0035773">
    <property type="term" value="P:insulin secretion involved in cellular response to glucose stimulus"/>
    <property type="evidence" value="ECO:0000250"/>
    <property type="project" value="UniProtKB"/>
</dbReference>
<dbReference type="GO" id="GO:0006629">
    <property type="term" value="P:lipid metabolic process"/>
    <property type="evidence" value="ECO:0007669"/>
    <property type="project" value="UniProtKB-KW"/>
</dbReference>
<dbReference type="GO" id="GO:0007269">
    <property type="term" value="P:neurotransmitter secretion"/>
    <property type="evidence" value="ECO:0000250"/>
    <property type="project" value="UniProtKB"/>
</dbReference>
<dbReference type="GO" id="GO:0051046">
    <property type="term" value="P:regulation of secretion"/>
    <property type="evidence" value="ECO:0000318"/>
    <property type="project" value="GO_Central"/>
</dbReference>
<dbReference type="CDD" id="cd14610">
    <property type="entry name" value="R-PTP-N2"/>
    <property type="match status" value="1"/>
</dbReference>
<dbReference type="FunFam" id="3.30.70.2470:FF:000001">
    <property type="entry name" value="receptor-type tyrosine-protein phosphatase-like N isoform X1"/>
    <property type="match status" value="1"/>
</dbReference>
<dbReference type="FunFam" id="3.90.190.10:FF:000017">
    <property type="entry name" value="receptor-type tyrosine-protein phosphatase-like N isoform X2"/>
    <property type="match status" value="1"/>
</dbReference>
<dbReference type="Gene3D" id="3.90.190.10">
    <property type="entry name" value="Protein tyrosine phosphatase superfamily"/>
    <property type="match status" value="1"/>
</dbReference>
<dbReference type="Gene3D" id="3.30.70.2470">
    <property type="entry name" value="Protein-tyrosine phosphatase receptor IA-2 ectodomain"/>
    <property type="match status" value="1"/>
</dbReference>
<dbReference type="InterPro" id="IPR033522">
    <property type="entry name" value="IA-2/IA-2_beta"/>
</dbReference>
<dbReference type="InterPro" id="IPR029021">
    <property type="entry name" value="Prot-tyrosine_phosphatase-like"/>
</dbReference>
<dbReference type="InterPro" id="IPR000242">
    <property type="entry name" value="PTP_cat"/>
</dbReference>
<dbReference type="InterPro" id="IPR021613">
    <property type="entry name" value="Receptor_IA-2_dom"/>
</dbReference>
<dbReference type="InterPro" id="IPR038112">
    <property type="entry name" value="Receptor_IA-2_ectodomain_sf"/>
</dbReference>
<dbReference type="InterPro" id="IPR016130">
    <property type="entry name" value="Tyr_Pase_AS"/>
</dbReference>
<dbReference type="InterPro" id="IPR003595">
    <property type="entry name" value="Tyr_Pase_cat"/>
</dbReference>
<dbReference type="InterPro" id="IPR000387">
    <property type="entry name" value="Tyr_Pase_dom"/>
</dbReference>
<dbReference type="PANTHER" id="PTHR46106">
    <property type="entry name" value="IA-2 PROTEIN TYROSINE PHOSPHATASE, ISOFORM C"/>
    <property type="match status" value="1"/>
</dbReference>
<dbReference type="PANTHER" id="PTHR46106:SF5">
    <property type="entry name" value="RECEPTOR-TYPE TYROSINE-PROTEIN PHOSPHATASE N2"/>
    <property type="match status" value="1"/>
</dbReference>
<dbReference type="Pfam" id="PF11548">
    <property type="entry name" value="Receptor_IA-2"/>
    <property type="match status" value="1"/>
</dbReference>
<dbReference type="Pfam" id="PF00102">
    <property type="entry name" value="Y_phosphatase"/>
    <property type="match status" value="1"/>
</dbReference>
<dbReference type="PRINTS" id="PR00700">
    <property type="entry name" value="PRTYPHPHTASE"/>
</dbReference>
<dbReference type="SMART" id="SM00194">
    <property type="entry name" value="PTPc"/>
    <property type="match status" value="1"/>
</dbReference>
<dbReference type="SMART" id="SM00404">
    <property type="entry name" value="PTPc_motif"/>
    <property type="match status" value="1"/>
</dbReference>
<dbReference type="SMART" id="SM01305">
    <property type="entry name" value="RESP18"/>
    <property type="match status" value="1"/>
</dbReference>
<dbReference type="SUPFAM" id="SSF52799">
    <property type="entry name" value="(Phosphotyrosine protein) phosphatases II"/>
    <property type="match status" value="1"/>
</dbReference>
<dbReference type="PROSITE" id="PS00383">
    <property type="entry name" value="TYR_PHOSPHATASE_1"/>
    <property type="match status" value="1"/>
</dbReference>
<dbReference type="PROSITE" id="PS50056">
    <property type="entry name" value="TYR_PHOSPHATASE_2"/>
    <property type="match status" value="1"/>
</dbReference>
<dbReference type="PROSITE" id="PS50055">
    <property type="entry name" value="TYR_PHOSPHATASE_PTP"/>
    <property type="match status" value="1"/>
</dbReference>
<gene>
    <name type="primary">Ptprn2</name>
</gene>
<proteinExistence type="evidence at protein level"/>
<sequence length="1004" mass="111863">MGLPLPLLLLLLLPPPLPRALPAPASARGRQLPGRLGCLFEDGLCGSLETCVNDGVFGRCQKVPALDTYRYEVSPGALLHLRIILQKLSRTGFTWQDDYTQRVIAQELSNLPKAYLWHEEASSPARSLQQNADNEKWFSLESEVALAKTLRRYLPYLELLSQAPTANAHPRIDHETRPVKGEDSSPENILTYVAHTSALTYPPATRVKYPDNLLRPLSRLQPDELSPKVDSDIDKQKLIAALGAYTAQRPPGENDPEPRYLVHSPMRAPRPFAAPALSQRWPLPPGDSKDSLSMGDDTLLRSLLKDLQQQAEVDRLGSLKLEEQADSIAGAIQSDPVEGSQESHGRGAEGQLREQADAPEEMLQDHRLPEVDDPAAYKEVSRLSFKLGDLLKDHGSPLLPEAPLLEKSSRAEMKKSEQPEEVLSSEEETAGVEHVKSRTYSKDLLERKPNSEPQPWRLEDQFQNRAPEVWEDEQNLKLAAQGPPSGGLQLEVQPSEEEQQGYILTGNNPLSPEKGKQLMDEVAHLLRVPSSFFADVKVLGPAVIFKVSANIQNMTTADVTKAAVDNKDELEKATGLTILQSGIRPKGKLKLLPHPEEQEDSTKFIVLTFLSIACILAVLLASSLAYCLRHNSHYKLKEKLSGLGADPSADATEAYQELCRQRMAVRPQDHSEGPHTSRINSVSSQLSDGPMPSPSARSSTSSWSEEPAQSNMDISTGHMILAYMEDHLKNKNRLEKEWEALCAYQAEPDSSLVAQREENAPKNRSLAVLTYDHSRILLKSENSHSNSDYINASPIMDHDPRNPAYIATQGPLPATVADFWQMVWESGCAVIVMLTPLSENGVRQCHHYWPDEGSNVYHVYEVNLVSEHIWCQDFLVRSFYLKNLQTNETRTVTQFHFLSWYDQGVPSSTRSLLDFRRKVNKCYRGRSCPIIVHCSDGAGRSGTYVLIDMVLNKMAKGAKEIDIAATLEHLRDQRPGMVQTKEQFEFALTAVAEEVNAILKALPQ</sequence>
<evidence type="ECO:0000250" key="1"/>
<evidence type="ECO:0000250" key="2">
    <source>
        <dbReference type="UniProtKB" id="P80560"/>
    </source>
</evidence>
<evidence type="ECO:0000250" key="3">
    <source>
        <dbReference type="UniProtKB" id="Q92932"/>
    </source>
</evidence>
<evidence type="ECO:0000255" key="4"/>
<evidence type="ECO:0000255" key="5">
    <source>
        <dbReference type="PROSITE-ProRule" id="PRU00160"/>
    </source>
</evidence>
<evidence type="ECO:0000255" key="6">
    <source>
        <dbReference type="PROSITE-ProRule" id="PRU10044"/>
    </source>
</evidence>
<evidence type="ECO:0000256" key="7">
    <source>
        <dbReference type="SAM" id="MobiDB-lite"/>
    </source>
</evidence>
<evidence type="ECO:0000269" key="8">
    <source>
    </source>
</evidence>
<evidence type="ECO:0000269" key="9">
    <source>
    </source>
</evidence>
<evidence type="ECO:0000269" key="10">
    <source>
    </source>
</evidence>
<evidence type="ECO:0000269" key="11">
    <source>
    </source>
</evidence>
<evidence type="ECO:0000269" key="12">
    <source>
    </source>
</evidence>
<evidence type="ECO:0000303" key="13">
    <source>
    </source>
</evidence>
<evidence type="ECO:0000305" key="14"/>
<evidence type="ECO:0000305" key="15">
    <source>
    </source>
</evidence>
<evidence type="ECO:0000305" key="16">
    <source>
    </source>
</evidence>
<evidence type="ECO:0007744" key="17">
    <source>
    </source>
</evidence>
<feature type="signal peptide" evidence="4">
    <location>
        <begin position="1"/>
        <end position="27"/>
    </location>
</feature>
<feature type="chain" id="PRO_0000025457" description="Receptor-type tyrosine-protein phosphatase N2">
    <location>
        <begin position="28"/>
        <end position="1004"/>
    </location>
</feature>
<feature type="chain" id="PRO_0000438073" description="IA-2beta60" evidence="2">
    <location>
        <begin position="491"/>
        <end position="1004"/>
    </location>
</feature>
<feature type="topological domain" description="Extracellular" evidence="4">
    <location>
        <begin position="28"/>
        <end position="603"/>
    </location>
</feature>
<feature type="transmembrane region" description="Helical" evidence="4">
    <location>
        <begin position="604"/>
        <end position="624"/>
    </location>
</feature>
<feature type="topological domain" description="Cytoplasmic" evidence="4">
    <location>
        <begin position="625"/>
        <end position="1004"/>
    </location>
</feature>
<feature type="domain" description="Tyrosine-protein phosphatase" evidence="5">
    <location>
        <begin position="734"/>
        <end position="994"/>
    </location>
</feature>
<feature type="region of interest" description="Involved in localization to secretory granules; interaction with CPE" evidence="2">
    <location>
        <begin position="1"/>
        <end position="409"/>
    </location>
</feature>
<feature type="region of interest" description="Disordered" evidence="7">
    <location>
        <begin position="274"/>
        <end position="294"/>
    </location>
</feature>
<feature type="region of interest" description="Disordered" evidence="7">
    <location>
        <begin position="333"/>
        <end position="360"/>
    </location>
</feature>
<feature type="region of interest" description="Disordered" evidence="7">
    <location>
        <begin position="393"/>
        <end position="459"/>
    </location>
</feature>
<feature type="region of interest" description="Disordered" evidence="7">
    <location>
        <begin position="665"/>
        <end position="710"/>
    </location>
</feature>
<feature type="short sequence motif" description="Tyrosine-based internalization motif" evidence="15">
    <location>
        <begin position="655"/>
        <end position="664"/>
    </location>
</feature>
<feature type="short sequence motif" description="Leucine-based sorting signal" evidence="2">
    <location>
        <begin position="993"/>
        <end position="999"/>
    </location>
</feature>
<feature type="compositionally biased region" description="Basic and acidic residues" evidence="7">
    <location>
        <begin position="341"/>
        <end position="356"/>
    </location>
</feature>
<feature type="compositionally biased region" description="Basic and acidic residues" evidence="7">
    <location>
        <begin position="407"/>
        <end position="418"/>
    </location>
</feature>
<feature type="compositionally biased region" description="Acidic residues" evidence="7">
    <location>
        <begin position="419"/>
        <end position="430"/>
    </location>
</feature>
<feature type="compositionally biased region" description="Basic and acidic residues" evidence="7">
    <location>
        <begin position="431"/>
        <end position="450"/>
    </location>
</feature>
<feature type="compositionally biased region" description="Polar residues" evidence="7">
    <location>
        <begin position="677"/>
        <end position="687"/>
    </location>
</feature>
<feature type="compositionally biased region" description="Low complexity" evidence="7">
    <location>
        <begin position="694"/>
        <end position="710"/>
    </location>
</feature>
<feature type="active site" description="Phosphocysteine intermediate" evidence="5 6">
    <location>
        <position position="934"/>
    </location>
</feature>
<feature type="binding site" evidence="1">
    <location>
        <position position="902"/>
    </location>
    <ligand>
        <name>substrate</name>
    </ligand>
</feature>
<feature type="binding site" evidence="1">
    <location>
        <begin position="934"/>
        <end position="940"/>
    </location>
    <ligand>
        <name>substrate</name>
    </ligand>
</feature>
<feature type="binding site" evidence="1">
    <location>
        <position position="979"/>
    </location>
    <ligand>
        <name>substrate</name>
    </ligand>
</feature>
<feature type="site" description="Cleavage" evidence="1">
    <location>
        <begin position="415"/>
        <end position="416"/>
    </location>
</feature>
<feature type="modified residue" description="Omega-N-methylarginine" evidence="2">
    <location>
        <position position="259"/>
    </location>
</feature>
<feature type="modified residue" description="Phosphoserine" evidence="17">
    <location>
        <position position="340"/>
    </location>
</feature>
<feature type="modified residue" description="Phosphoserine" evidence="2">
    <location>
        <position position="424"/>
    </location>
</feature>
<feature type="modified residue" description="Phosphoserine" evidence="2">
    <location>
        <position position="425"/>
    </location>
</feature>
<feature type="modified residue" description="Phosphoserine; by PKA" evidence="8">
    <location>
        <position position="681"/>
    </location>
</feature>
<feature type="modified residue" description="Phosphoserine" evidence="17">
    <location>
        <position position="687"/>
    </location>
</feature>
<feature type="modified residue" description="Phosphothreonine; by PKA" evidence="8">
    <location>
        <position position="700"/>
    </location>
</feature>
<feature type="modified residue" description="N6-acetyllysine" evidence="3">
    <location>
        <position position="959"/>
    </location>
</feature>
<feature type="glycosylation site" description="N-linked (GlcNAc...) asparagine" evidence="4">
    <location>
        <position position="553"/>
    </location>
</feature>
<feature type="mutagenesis site" description="Impairs internalization; decreases interaction with AP2M1." evidence="10">
    <original>Y</original>
    <variation>A</variation>
    <location>
        <position position="655"/>
    </location>
</feature>
<comment type="function">
    <text evidence="2 11">Plays a role in vesicle-mediated secretory processes. Required for normal accumulation of secretory vesicles in hippocampus, pituitary and pancreatic islets. Required for the accumulation of normal levels of insulin-containing vesicles and preventing their degradation. Plays a role in insulin secretion in response to glucose stimuli. Required for normal accumulation of the neurotransmitters norepinephrine, dopamine and serotonin in the brain. In females, but not in males, required for normal accumulation and secretion of pituitary hormones, such as luteinizing hormone (LH) and follicle-stimulating hormone (FSH). Required to maintain normal levels of renin expression and renin release. May regulate catalytic active protein-tyrosine phosphatases such as PTPRA through dimerization (By similarity). Has phosphatidylinositol phosphatase activity; the PIPase activity is involved in its ability to regulate insulin secretion. Can dephosphorylate phosphatidylinositol 4,5-biphosphate, phosphatidylinositol 5-phosphate and phosphatidylinositol 3-phosphate (PubMed:20097759). Regulates PI(4,5)P2 level in the plasma membrane and localization of cofilin at the plasma membrane and thus is indirectly involved in regulation of actin dynamics related to cell migration and metastasis; upon hydrolysis of PI(4,5)P2 cofilin is released from the plasma membrane and acts in the cytoplasm in severing F-actin filaments (By similarity).</text>
</comment>
<comment type="catalytic activity">
    <reaction evidence="6">
        <text>O-phospho-L-tyrosyl-[protein] + H2O = L-tyrosyl-[protein] + phosphate</text>
        <dbReference type="Rhea" id="RHEA:10684"/>
        <dbReference type="Rhea" id="RHEA-COMP:10136"/>
        <dbReference type="Rhea" id="RHEA-COMP:20101"/>
        <dbReference type="ChEBI" id="CHEBI:15377"/>
        <dbReference type="ChEBI" id="CHEBI:43474"/>
        <dbReference type="ChEBI" id="CHEBI:46858"/>
        <dbReference type="ChEBI" id="CHEBI:61978"/>
        <dbReference type="EC" id="3.1.3.48"/>
    </reaction>
</comment>
<comment type="subunit">
    <text evidence="2 12">Self-associates. Interacts (via cytoplasmic domain) with PTPRN (via cytoplasmic domain). Interacts (precursor form) with CPE. Interacts with HAP1. Interacts with AP2A1 or AP2A2 and AP1G1; indicative for an association with adaptor protein complex 2 (AP-2) and adaptor protein complex 1 (AP-1) (By similarity). Interacts with AP2M1; indicative for an association with adaptor protein complex 2 (AP-2) (PubMed:15882444). Interacts with MYO5A (PubMed:25744490).</text>
</comment>
<comment type="subcellular location">
    <subcellularLocation>
        <location evidence="9">Cytoplasmic vesicle</location>
        <location evidence="9">Secretory vesicle membrane</location>
        <topology evidence="9">Single-pass type I membrane protein</topology>
    </subcellularLocation>
    <subcellularLocation>
        <location evidence="2">Cytoplasmic vesicle</location>
        <location evidence="2">Secretory vesicle</location>
        <location evidence="2">Synaptic vesicle membrane</location>
        <topology evidence="2">Single-pass type I membrane protein</topology>
    </subcellularLocation>
    <text evidence="2 10 14">Predominantly found on dense-core secretory granules. Sorting to secretory granules in part is dependent of the N-terminal propeptide domain of the precursor and its interaction with CPE (By similarity). Transiently found at the cell membrane, when secretory vesicles fuse with the cell membrane to release their cargo. Is then endocytosed and recycled to secretory vesicles involving clathrin-dependent AP2-mediated endocytosis (PubMed:15882444). Recycled via STX6- but not TTTGN1/TGN38-containing compartments (By similarity).</text>
</comment>
<comment type="subcellular location">
    <molecule>IA-2beta60</molecule>
    <subcellularLocation>
        <location evidence="14">Cytoplasmic vesicle</location>
        <location evidence="14">Secretory vesicle membrane</location>
    </subcellularLocation>
</comment>
<comment type="domain">
    <text evidence="15">The tyrosine-based internalization signal is proposed to function at the level of clathrin-mediated endocytosis and recycling.</text>
</comment>
<comment type="domain">
    <text evidence="2">The leucine-based sorting signal is proposed to function in trafficking at the plasma membrane.</text>
</comment>
<comment type="PTM">
    <text evidence="2">Subject to proteolytic cleavage at multiple sites.</text>
</comment>
<comment type="similarity">
    <text evidence="14">Belongs to the protein-tyrosine phosphatase family. Receptor class 8 subfamily.</text>
</comment>
<comment type="caution">
    <text evidence="14">Has no tyrosine-protein phosphatase activity at mild acidic conditions (pH 5.5). The in vivo relevance of the low PPase activity for the human protein at acidic conditions (pH 4.5) is questioned. This catalytic activity seems to be affected by the replacement of a highly conserved residue in the tyrosine-protein phosphatase domain.</text>
</comment>
<reference key="1">
    <citation type="journal article" date="1996" name="J. Biol. Chem.">
        <title>Molecular cloning of phogrin, a protein-tyrosine phosphatase homologue localized to insulin secretory granule membranes.</title>
        <authorList>
            <person name="Wasmeier C."/>
            <person name="Hutton J.C."/>
        </authorList>
    </citation>
    <scope>NUCLEOTIDE SEQUENCE [MRNA]</scope>
    <scope>PROTEOLYTIC PROCESSING</scope>
    <source>
        <strain>New England Deaconess Hospital</strain>
        <tissue>Insulinoma</tissue>
    </source>
</reference>
<reference key="2">
    <citation type="submission" date="1996-11" db="EMBL/GenBank/DDBJ databases">
        <authorList>
            <person name="Fitzgerald L.R."/>
            <person name="Walton K.M."/>
            <person name="Dixon J.E."/>
            <person name="Largent B.L."/>
        </authorList>
    </citation>
    <scope>NUCLEOTIDE SEQUENCE [MRNA]</scope>
    <source>
        <strain>Sprague-Dawley</strain>
    </source>
</reference>
<reference key="3">
    <citation type="journal article" date="2001" name="J. Biol. Chem.">
        <title>Secretagogue-dependent phosphorylation of the insulin granule membrane protein phogrin is mediated by cAMP-dependent protein kinase.</title>
        <authorList>
            <person name="Wasmeier C."/>
            <person name="Hutton J.C."/>
        </authorList>
    </citation>
    <scope>PHOSPHORYLATION AT SER-681 AND THR-700</scope>
</reference>
<reference key="4">
    <citation type="journal article" date="2004" name="J. Biol. Chem.">
        <title>Secretogranin III binds to cholesterol in the secretory granule membrane as an adapter for chromogranin A.</title>
        <authorList>
            <person name="Hosaka M."/>
            <person name="Suda M."/>
            <person name="Sakai Y."/>
            <person name="Izumi T."/>
            <person name="Watanabe T."/>
            <person name="Takeuchi T."/>
        </authorList>
    </citation>
    <scope>SUBCELLULAR LOCATION</scope>
</reference>
<reference key="5">
    <citation type="journal article" date="2005" name="Traffic">
        <title>An extended tyrosine-targeting motif for endocytosis and recycling of the dense-core vesicle membrane protein phogrin.</title>
        <authorList>
            <person name="Wasmeier C."/>
            <person name="Burgos P.V."/>
            <person name="Trudeau T."/>
            <person name="Davidson H.W."/>
            <person name="Hutton J.C."/>
        </authorList>
    </citation>
    <scope>SUBCELLULAR LOCATION</scope>
    <scope>MUTAGENESIS OF TYR-655</scope>
    <scope>TYROSINE-BASED INTERNALIZATION MOTIF</scope>
    <scope>INTERACTION WITH AP2M1</scope>
</reference>
<reference key="6">
    <citation type="journal article" date="2010" name="J. Biol. Chem.">
        <title>The neurosecretory vesicle protein phogrin functions as a phosphatidylinositol phosphatase to regulate insulin secretion.</title>
        <authorList>
            <person name="Caromile L.A."/>
            <person name="Oganesian A."/>
            <person name="Coats S.A."/>
            <person name="Seifert R.A."/>
            <person name="Bowen-Pope D.F."/>
        </authorList>
    </citation>
    <scope>FUNCTION AS PHOSPHATIDYLINOSITOL PHOSPHATASE</scope>
    <scope>CATALYTIC ACTIVITY</scope>
    <scope>LACK OF FUNCTION AS PROTEIN TYROSINE PHOSPHATASE</scope>
</reference>
<reference key="7">
    <citation type="journal article" date="2012" name="Nat. Commun.">
        <title>Quantitative maps of protein phosphorylation sites across 14 different rat organs and tissues.</title>
        <authorList>
            <person name="Lundby A."/>
            <person name="Secher A."/>
            <person name="Lage K."/>
            <person name="Nordsborg N.B."/>
            <person name="Dmytriyev A."/>
            <person name="Lundby C."/>
            <person name="Olsen J.V."/>
        </authorList>
    </citation>
    <scope>PHOSPHORYLATION [LARGE SCALE ANALYSIS] AT SER-340 AND SER-687</scope>
    <scope>IDENTIFICATION BY MASS SPECTROMETRY [LARGE SCALE ANALYSIS]</scope>
</reference>
<reference key="8">
    <citation type="journal article" date="2015" name="Histochem. Cell Biol.">
        <title>HAP1 helps to regulate actin-based transport of insulin-containing granules in pancreatic beta cells.</title>
        <authorList>
            <person name="Wang Z."/>
            <person name="Peng T."/>
            <person name="Wu H."/>
            <person name="He J."/>
            <person name="Li H."/>
        </authorList>
    </citation>
    <scope>INTERACTION WITH MYO5A</scope>
</reference>
<protein>
    <recommendedName>
        <fullName>Receptor-type tyrosine-protein phosphatase N2</fullName>
        <shortName>R-PTP-N2</shortName>
        <ecNumber evidence="16">3.1.3.-</ecNumber>
        <ecNumber>3.1.3.48</ecNumber>
    </recommendedName>
    <alternativeName>
        <fullName>PTP NE-6</fullName>
        <shortName>PTPNE6</shortName>
    </alternativeName>
    <alternativeName>
        <fullName evidence="13">Phogrin</fullName>
    </alternativeName>
    <component>
        <recommendedName>
            <fullName>IA-2beta60</fullName>
        </recommendedName>
    </component>
</protein>
<keyword id="KW-0007">Acetylation</keyword>
<keyword id="KW-0968">Cytoplasmic vesicle</keyword>
<keyword id="KW-0325">Glycoprotein</keyword>
<keyword id="KW-0378">Hydrolase</keyword>
<keyword id="KW-0443">Lipid metabolism</keyword>
<keyword id="KW-0472">Membrane</keyword>
<keyword id="KW-0488">Methylation</keyword>
<keyword id="KW-1208">Phospholipid metabolism</keyword>
<keyword id="KW-0597">Phosphoprotein</keyword>
<keyword id="KW-0904">Protein phosphatase</keyword>
<keyword id="KW-0675">Receptor</keyword>
<keyword id="KW-1185">Reference proteome</keyword>
<keyword id="KW-0732">Signal</keyword>
<keyword id="KW-0770">Synapse</keyword>
<keyword id="KW-0812">Transmembrane</keyword>
<keyword id="KW-1133">Transmembrane helix</keyword>